<comment type="function">
    <text evidence="1 2">Involved in the biosynthesis of petrobactin, a catecholate siderophore that functions in both iron acquisition and virulence (PubMed:17189355, PubMed:17346033). Catalyzes the adenylation of 3,4-dihydroxybenzoate (3,4-DHBA) to the corresponding AMP ester, followed by the transfer of the activated unit to the phosphopantetheine thiol of the aryl-carrier protein AsbD (PubMed:17346033).</text>
</comment>
<comment type="catalytic activity">
    <reaction evidence="2">
        <text>holo-[aryl-carrier protein] + 3,4-dihydroxybenzoate + ATP = 3,4-dihydroxybenzoyl-[aryl-carrier protein] + AMP + diphosphate</text>
        <dbReference type="Rhea" id="RHEA:62460"/>
        <dbReference type="Rhea" id="RHEA-COMP:15903"/>
        <dbReference type="Rhea" id="RHEA-COMP:15941"/>
        <dbReference type="ChEBI" id="CHEBI:30616"/>
        <dbReference type="ChEBI" id="CHEBI:33019"/>
        <dbReference type="ChEBI" id="CHEBI:36241"/>
        <dbReference type="ChEBI" id="CHEBI:64479"/>
        <dbReference type="ChEBI" id="CHEBI:144963"/>
        <dbReference type="ChEBI" id="CHEBI:456215"/>
        <dbReference type="EC" id="6.2.1.62"/>
    </reaction>
</comment>
<comment type="catalytic activity">
    <reaction evidence="2">
        <text>3,4-dihydroxybenzoate + ATP + H(+) = 3,4-dihydroxybenzoyl-5'-AMP + diphosphate</text>
        <dbReference type="Rhea" id="RHEA:62468"/>
        <dbReference type="ChEBI" id="CHEBI:15378"/>
        <dbReference type="ChEBI" id="CHEBI:30616"/>
        <dbReference type="ChEBI" id="CHEBI:33019"/>
        <dbReference type="ChEBI" id="CHEBI:36241"/>
        <dbReference type="ChEBI" id="CHEBI:144942"/>
    </reaction>
</comment>
<comment type="catalytic activity">
    <reaction evidence="2">
        <text>3,4-dihydroxybenzoyl-5'-AMP + holo-[aryl-carrier protein] = 3,4-dihydroxybenzoyl-[aryl-carrier protein] + AMP + H(+)</text>
        <dbReference type="Rhea" id="RHEA:62476"/>
        <dbReference type="Rhea" id="RHEA-COMP:15903"/>
        <dbReference type="Rhea" id="RHEA-COMP:15941"/>
        <dbReference type="ChEBI" id="CHEBI:15378"/>
        <dbReference type="ChEBI" id="CHEBI:64479"/>
        <dbReference type="ChEBI" id="CHEBI:144942"/>
        <dbReference type="ChEBI" id="CHEBI:144963"/>
        <dbReference type="ChEBI" id="CHEBI:456215"/>
    </reaction>
</comment>
<comment type="activity regulation">
    <text evidence="2">ATP-pyrophosphate exchange is inhibited in vitro by nonhydrolyzable acylsulfamate analogs that mimic the AsbC-bound intermediate 3,4-dihydroxybenzoyl-AMP.</text>
</comment>
<comment type="biophysicochemical properties">
    <kinetics>
        <KM evidence="2">3.1 uM for 3,4-DHBA</KM>
        <KM evidence="2">216 uM for ATP</KM>
        <text evidence="2">kcat is 7.1 min(-1) with 3,4-DHBA as substrate. kcat is 9.1 min(-1) with ATP as substrate.</text>
    </kinetics>
</comment>
<comment type="pathway">
    <text evidence="1 2">Siderophore biosynthesis; petrobactin biosynthesis.</text>
</comment>
<comment type="disruption phenotype">
    <text evidence="1">The deletion mutant cannot produce petrobactin on iron-depleted medium. In vitro analysis show that mutants grow to a very limited extent as vegetative cells in iron-depleted medium but are not able to outgrow from spores under the same culture conditions.</text>
</comment>
<comment type="similarity">
    <text evidence="5">Belongs to the ATP-dependent AMP-binding enzyme family.</text>
</comment>
<keyword id="KW-0067">ATP-binding</keyword>
<keyword id="KW-0436">Ligase</keyword>
<keyword id="KW-0547">Nucleotide-binding</keyword>
<keyword id="KW-1185">Reference proteome</keyword>
<dbReference type="EC" id="6.2.1.62" evidence="2"/>
<dbReference type="EMBL" id="AE017334">
    <property type="protein sequence ID" value="AAT31102.1"/>
    <property type="molecule type" value="Genomic_DNA"/>
</dbReference>
<dbReference type="RefSeq" id="WP_000909602.1">
    <property type="nucleotide sequence ID" value="NZ_WXXJ01000029.1"/>
</dbReference>
<dbReference type="SMR" id="Q81RQ7"/>
<dbReference type="DNASU" id="1085953"/>
<dbReference type="GeneID" id="45021905"/>
<dbReference type="KEGG" id="bar:GBAA_1983"/>
<dbReference type="PATRIC" id="fig|1392.230.peg.1943"/>
<dbReference type="HOGENOM" id="CLU_670490_0_0_9"/>
<dbReference type="OMA" id="EKHIIYA"/>
<dbReference type="OrthoDB" id="9803968at2"/>
<dbReference type="BioCyc" id="MetaCyc:MONOMER-14943"/>
<dbReference type="UniPathway" id="UPA01005"/>
<dbReference type="Proteomes" id="UP000000594">
    <property type="component" value="Chromosome"/>
</dbReference>
<dbReference type="GO" id="GO:0005524">
    <property type="term" value="F:ATP binding"/>
    <property type="evidence" value="ECO:0007669"/>
    <property type="project" value="UniProtKB-KW"/>
</dbReference>
<dbReference type="GO" id="GO:0031956">
    <property type="term" value="F:medium-chain fatty acid-CoA ligase activity"/>
    <property type="evidence" value="ECO:0007669"/>
    <property type="project" value="TreeGrafter"/>
</dbReference>
<dbReference type="GO" id="GO:0006631">
    <property type="term" value="P:fatty acid metabolic process"/>
    <property type="evidence" value="ECO:0007669"/>
    <property type="project" value="TreeGrafter"/>
</dbReference>
<dbReference type="CDD" id="cd04433">
    <property type="entry name" value="AFD_class_I"/>
    <property type="match status" value="1"/>
</dbReference>
<dbReference type="Gene3D" id="3.30.300.30">
    <property type="match status" value="1"/>
</dbReference>
<dbReference type="Gene3D" id="3.40.50.12780">
    <property type="entry name" value="N-terminal domain of ligase-like"/>
    <property type="match status" value="1"/>
</dbReference>
<dbReference type="InterPro" id="IPR025110">
    <property type="entry name" value="AMP-bd_C"/>
</dbReference>
<dbReference type="InterPro" id="IPR045851">
    <property type="entry name" value="AMP-bd_C_sf"/>
</dbReference>
<dbReference type="InterPro" id="IPR020845">
    <property type="entry name" value="AMP-binding_CS"/>
</dbReference>
<dbReference type="InterPro" id="IPR000873">
    <property type="entry name" value="AMP-dep_synth/lig_dom"/>
</dbReference>
<dbReference type="InterPro" id="IPR042099">
    <property type="entry name" value="ANL_N_sf"/>
</dbReference>
<dbReference type="NCBIfam" id="NF006167">
    <property type="entry name" value="PRK08308.1"/>
    <property type="match status" value="1"/>
</dbReference>
<dbReference type="PANTHER" id="PTHR43201">
    <property type="entry name" value="ACYL-COA SYNTHETASE"/>
    <property type="match status" value="1"/>
</dbReference>
<dbReference type="PANTHER" id="PTHR43201:SF5">
    <property type="entry name" value="MEDIUM-CHAIN ACYL-COA LIGASE ACSF2, MITOCHONDRIAL"/>
    <property type="match status" value="1"/>
</dbReference>
<dbReference type="Pfam" id="PF00501">
    <property type="entry name" value="AMP-binding"/>
    <property type="match status" value="1"/>
</dbReference>
<dbReference type="Pfam" id="PF13193">
    <property type="entry name" value="AMP-binding_C"/>
    <property type="match status" value="1"/>
</dbReference>
<dbReference type="SUPFAM" id="SSF56801">
    <property type="entry name" value="Acetyl-CoA synthetase-like"/>
    <property type="match status" value="1"/>
</dbReference>
<dbReference type="PROSITE" id="PS00455">
    <property type="entry name" value="AMP_BINDING"/>
    <property type="match status" value="1"/>
</dbReference>
<organism>
    <name type="scientific">Bacillus anthracis</name>
    <dbReference type="NCBI Taxonomy" id="1392"/>
    <lineage>
        <taxon>Bacteria</taxon>
        <taxon>Bacillati</taxon>
        <taxon>Bacillota</taxon>
        <taxon>Bacilli</taxon>
        <taxon>Bacillales</taxon>
        <taxon>Bacillaceae</taxon>
        <taxon>Bacillus</taxon>
        <taxon>Bacillus cereus group</taxon>
    </lineage>
</organism>
<name>ASBC_BACAN</name>
<evidence type="ECO:0000269" key="1">
    <source>
    </source>
</evidence>
<evidence type="ECO:0000269" key="2">
    <source>
    </source>
</evidence>
<evidence type="ECO:0000303" key="3">
    <source>
    </source>
</evidence>
<evidence type="ECO:0000303" key="4">
    <source>
    </source>
</evidence>
<evidence type="ECO:0000305" key="5"/>
<evidence type="ECO:0000312" key="6">
    <source>
        <dbReference type="EMBL" id="AAT31102.1"/>
    </source>
</evidence>
<protein>
    <recommendedName>
        <fullName evidence="5">3,4-dihydroxybenzoate--[aryl-carrier protein] ligase</fullName>
        <ecNumber evidence="2">6.2.1.62</ecNumber>
    </recommendedName>
    <alternativeName>
        <fullName evidence="4">3,4-dihydroxybenzoic acid-AMP ligase</fullName>
    </alternativeName>
    <alternativeName>
        <fullName evidence="5">Petrobactin biosynthesis protein AsbC</fullName>
    </alternativeName>
</protein>
<proteinExistence type="evidence at protein level"/>
<reference key="1">
    <citation type="journal article" date="2009" name="J. Bacteriol.">
        <title>The complete genome sequence of Bacillus anthracis Ames 'Ancestor'.</title>
        <authorList>
            <person name="Ravel J."/>
            <person name="Jiang L."/>
            <person name="Stanley S.T."/>
            <person name="Wilson M.R."/>
            <person name="Decker R.S."/>
            <person name="Read T.D."/>
            <person name="Worsham P."/>
            <person name="Keim P.S."/>
            <person name="Salzberg S.L."/>
            <person name="Fraser-Liggett C.M."/>
            <person name="Rasko D.A."/>
        </authorList>
    </citation>
    <scope>NUCLEOTIDE SEQUENCE [LARGE SCALE GENOMIC DNA]</scope>
    <source>
        <strain>Ames ancestor</strain>
    </source>
</reference>
<reference key="2">
    <citation type="journal article" date="2007" name="J. Bacteriol.">
        <title>Biosynthetic analysis of the petrobactin siderophore pathway from Bacillus anthracis.</title>
        <authorList>
            <person name="Lee J.Y."/>
            <person name="Janes B.K."/>
            <person name="Passalacqua K.D."/>
            <person name="Pfleger B.F."/>
            <person name="Bergman N.H."/>
            <person name="Liu H."/>
            <person name="Haakansson K."/>
            <person name="Somu R.V."/>
            <person name="Aldrich C.C."/>
            <person name="Cendrowski S."/>
            <person name="Hanna P.C."/>
            <person name="Sherman D.H."/>
        </authorList>
    </citation>
    <scope>FUNCTION</scope>
    <scope>PATHWAY</scope>
    <scope>DISRUPTION PHENOTYPE</scope>
    <source>
        <strain>Sterne</strain>
    </source>
</reference>
<reference key="3">
    <citation type="journal article" date="2007" name="Biochemistry">
        <title>Characterization and analysis of early enzymes for petrobactin biosynthesis in Bacillus anthracis.</title>
        <authorList>
            <person name="Pfleger B.F."/>
            <person name="Lee J.Y."/>
            <person name="Somu R.V."/>
            <person name="Aldrich C.C."/>
            <person name="Hanna P.C."/>
            <person name="Sherman D.H."/>
        </authorList>
    </citation>
    <scope>FUNCTION</scope>
    <scope>CATALYTIC ACTIVITY</scope>
    <scope>ACTIVITY REGULATION</scope>
    <scope>BIOPHYSICOCHEMICAL PROPERTIES</scope>
    <scope>PATHWAY</scope>
    <source>
        <strain>Sterne</strain>
    </source>
</reference>
<reference key="4">
    <citation type="journal article" date="2016" name="Mol. Microbiol.">
        <title>Flying under the radar: The non-canonical biochemistry and molecular biology of petrobactin from Bacillus anthracis.</title>
        <authorList>
            <person name="Hagan A.K."/>
            <person name="Carlson P.E. Jr."/>
            <person name="Hanna P.C."/>
        </authorList>
    </citation>
    <scope>REVIEW</scope>
</reference>
<accession>Q81RQ7</accession>
<accession>A0A2P0HD27</accession>
<accession>E9QYT2</accession>
<accession>E9QYT3</accession>
<accession>Q6HZY4</accession>
<accession>Q6KTW3</accession>
<gene>
    <name evidence="3" type="primary">asbC</name>
    <name evidence="6" type="ordered locus">GBAA_1983</name>
</gene>
<feature type="chain" id="PRO_0000450621" description="3,4-dihydroxybenzoate--[aryl-carrier protein] ligase">
    <location>
        <begin position="1"/>
        <end position="412"/>
    </location>
</feature>
<sequence>MLIVNREEYSKSDFDLRLQAYEEMEQFQEAAGNRFALCLKDPFDIITLVFFLKEKKSSVLLIHEDTPKETAIEMAKRANCIGILYGENSDFTKLEAVNYLAEEPSLLQYSSGTTGEPKLIRRAWTEVDTEIKVYNEALNCDIDEVPIVMAPVSHSYGLICGTLSAITRGSKPIIITNKNPKFALNIVRNTEKHIVYAVPLMLHIMGSFPQGTFQFHKIMTSGAPLPEALFYKLKETTTYMMQQYGCSEAGCISICHDMKSHLDLGNPLPHASISIGSDENAPEEIIVKMNDKEIFTKDLGYKSERGLHFMGRMDDVINVSGLKVFPIEVEETMLRLEGVQEAIVYRGKHPVMGEIVKAKVISHIDPVQIREWCMQHLPSYKVPHEIESVTEIPKNKTGKVSRKLLEMGEVTT</sequence>